<feature type="chain" id="PRO_0000443914" description="Autophagy-related protein 16">
    <location>
        <begin position="1"/>
        <end position="198"/>
    </location>
</feature>
<feature type="coiled-coil region" evidence="2">
    <location>
        <begin position="24"/>
        <end position="177"/>
    </location>
</feature>
<dbReference type="EMBL" id="HG970332">
    <property type="protein sequence ID" value="CEF74880.1"/>
    <property type="molecule type" value="Genomic_DNA"/>
</dbReference>
<dbReference type="RefSeq" id="XP_011318504.1">
    <property type="nucleotide sequence ID" value="XM_011320202.1"/>
</dbReference>
<dbReference type="SMR" id="I1RFS8"/>
<dbReference type="STRING" id="229533.I1RFS8"/>
<dbReference type="KEGG" id="fgr:FGSG_02566"/>
<dbReference type="VEuPathDB" id="FungiDB:FGRAMPH1_01G06151"/>
<dbReference type="eggNOG" id="ENOG502S5CU">
    <property type="taxonomic scope" value="Eukaryota"/>
</dbReference>
<dbReference type="HOGENOM" id="CLU_082752_1_0_1"/>
<dbReference type="InParanoid" id="I1RFS8"/>
<dbReference type="OrthoDB" id="98504at110618"/>
<dbReference type="Proteomes" id="UP000070720">
    <property type="component" value="Chromosome 1"/>
</dbReference>
<dbReference type="GO" id="GO:0034045">
    <property type="term" value="C:phagophore assembly site membrane"/>
    <property type="evidence" value="ECO:0007669"/>
    <property type="project" value="UniProtKB-SubCell"/>
</dbReference>
<dbReference type="GO" id="GO:0006914">
    <property type="term" value="P:autophagy"/>
    <property type="evidence" value="ECO:0007669"/>
    <property type="project" value="UniProtKB-KW"/>
</dbReference>
<dbReference type="GO" id="GO:0015031">
    <property type="term" value="P:protein transport"/>
    <property type="evidence" value="ECO:0007669"/>
    <property type="project" value="UniProtKB-KW"/>
</dbReference>
<dbReference type="CDD" id="cd22887">
    <property type="entry name" value="Atg16_CCD"/>
    <property type="match status" value="1"/>
</dbReference>
<dbReference type="Gene3D" id="1.20.5.170">
    <property type="match status" value="1"/>
</dbReference>
<dbReference type="InterPro" id="IPR013923">
    <property type="entry name" value="Autophagy-rel_prot_16_dom"/>
</dbReference>
<dbReference type="Pfam" id="PF08614">
    <property type="entry name" value="ATG16"/>
    <property type="match status" value="1"/>
</dbReference>
<accession>I1RFS8</accession>
<name>ATG16_GIBZE</name>
<comment type="function">
    <text evidence="1 3">Stabilizes the ATG5-ATG12 conjugate (By similarity). The ATG5-ATG12/ATG16 complex is required for efficient promotion of ATG8-conjugation to phosphatidylethanolamine and ATG8 localization to the pre-autophagosomal structure (PAS) (By similarity). Also recruits ATG3 to the PAS (By similarity). Involved in endoplasmic reticulum-specific autophagic process and is essential for the survival of cells subjected to severe ER stress (By similarity). Autophagy is required for proper vegetative growth, asexual/sexual reproduction, and full virulence (PubMed:28894236). Autophagy is particularly involved in the biosynthesis of deoxynivalenol (DON), an important virulence determinant (PubMed:28894236).</text>
</comment>
<comment type="subunit">
    <text evidence="1">Homodimer (By similarity). Part of the ATG5-ATG12/ATG16 complex (By similarity). Several units of each may be present in this complex (By similarity). Interacts directly with ATG12 (By similarity).</text>
</comment>
<comment type="subcellular location">
    <subcellularLocation>
        <location evidence="1">Preautophagosomal structure membrane</location>
        <topology evidence="1">Peripheral membrane protein</topology>
    </subcellularLocation>
</comment>
<comment type="disruption phenotype">
    <text evidence="3">Does not significantly decrease the growth rate under nutrient-rich conditions (PubMed:28894236). Strongly reduces conidiation (PubMed:28894236). Causes only mild infection in point-inoculated spikelets of flowering wheat heads and impairs the spreading to nearby spikelets (PubMed:28894236). Also reduces strongly the production of deoxynivalenol (DON), an important virulence determinant (PubMed:28894236).</text>
</comment>
<comment type="similarity">
    <text evidence="5">Belongs to the ATG16 family.</text>
</comment>
<sequence length="198" mass="22848">MPNWRDQYLSGIKDAELNNPVNMELVQTCSQMADRISALEAEKNGLETLVTTNGKTTARPTEPSTNDPAVAQLKQDLAEALRSKGVAEKRLRSSEEELLQLRSKHKTNTRSIRDLTADKNSLTTRLKDREYELREKRKFIEQVQDEMIALNLQMSMAEKERDKVKKENKELVDRWMKRMAQEAEAMNLANEPIFKKGR</sequence>
<reference key="1">
    <citation type="journal article" date="2007" name="Science">
        <title>The Fusarium graminearum genome reveals a link between localized polymorphism and pathogen specialization.</title>
        <authorList>
            <person name="Cuomo C.A."/>
            <person name="Gueldener U."/>
            <person name="Xu J.-R."/>
            <person name="Trail F."/>
            <person name="Turgeon B.G."/>
            <person name="Di Pietro A."/>
            <person name="Walton J.D."/>
            <person name="Ma L.-J."/>
            <person name="Baker S.E."/>
            <person name="Rep M."/>
            <person name="Adam G."/>
            <person name="Antoniw J."/>
            <person name="Baldwin T."/>
            <person name="Calvo S.E."/>
            <person name="Chang Y.-L."/>
            <person name="DeCaprio D."/>
            <person name="Gale L.R."/>
            <person name="Gnerre S."/>
            <person name="Goswami R.S."/>
            <person name="Hammond-Kosack K."/>
            <person name="Harris L.J."/>
            <person name="Hilburn K."/>
            <person name="Kennell J.C."/>
            <person name="Kroken S."/>
            <person name="Magnuson J.K."/>
            <person name="Mannhaupt G."/>
            <person name="Mauceli E.W."/>
            <person name="Mewes H.-W."/>
            <person name="Mitterbauer R."/>
            <person name="Muehlbauer G."/>
            <person name="Muensterkoetter M."/>
            <person name="Nelson D."/>
            <person name="O'Donnell K."/>
            <person name="Ouellet T."/>
            <person name="Qi W."/>
            <person name="Quesneville H."/>
            <person name="Roncero M.I.G."/>
            <person name="Seong K.-Y."/>
            <person name="Tetko I.V."/>
            <person name="Urban M."/>
            <person name="Waalwijk C."/>
            <person name="Ward T.J."/>
            <person name="Yao J."/>
            <person name="Birren B.W."/>
            <person name="Kistler H.C."/>
        </authorList>
    </citation>
    <scope>NUCLEOTIDE SEQUENCE [LARGE SCALE GENOMIC DNA]</scope>
    <source>
        <strain>ATCC MYA-4620 / CBS 123657 / FGSC 9075 / NRRL 31084 / PH-1</strain>
    </source>
</reference>
<reference key="2">
    <citation type="journal article" date="2010" name="Nature">
        <title>Comparative genomics reveals mobile pathogenicity chromosomes in Fusarium.</title>
        <authorList>
            <person name="Ma L.-J."/>
            <person name="van der Does H.C."/>
            <person name="Borkovich K.A."/>
            <person name="Coleman J.J."/>
            <person name="Daboussi M.-J."/>
            <person name="Di Pietro A."/>
            <person name="Dufresne M."/>
            <person name="Freitag M."/>
            <person name="Grabherr M."/>
            <person name="Henrissat B."/>
            <person name="Houterman P.M."/>
            <person name="Kang S."/>
            <person name="Shim W.-B."/>
            <person name="Woloshuk C."/>
            <person name="Xie X."/>
            <person name="Xu J.-R."/>
            <person name="Antoniw J."/>
            <person name="Baker S.E."/>
            <person name="Bluhm B.H."/>
            <person name="Breakspear A."/>
            <person name="Brown D.W."/>
            <person name="Butchko R.A.E."/>
            <person name="Chapman S."/>
            <person name="Coulson R."/>
            <person name="Coutinho P.M."/>
            <person name="Danchin E.G.J."/>
            <person name="Diener A."/>
            <person name="Gale L.R."/>
            <person name="Gardiner D.M."/>
            <person name="Goff S."/>
            <person name="Hammond-Kosack K.E."/>
            <person name="Hilburn K."/>
            <person name="Hua-Van A."/>
            <person name="Jonkers W."/>
            <person name="Kazan K."/>
            <person name="Kodira C.D."/>
            <person name="Koehrsen M."/>
            <person name="Kumar L."/>
            <person name="Lee Y.-H."/>
            <person name="Li L."/>
            <person name="Manners J.M."/>
            <person name="Miranda-Saavedra D."/>
            <person name="Mukherjee M."/>
            <person name="Park G."/>
            <person name="Park J."/>
            <person name="Park S.-Y."/>
            <person name="Proctor R.H."/>
            <person name="Regev A."/>
            <person name="Ruiz-Roldan M.C."/>
            <person name="Sain D."/>
            <person name="Sakthikumar S."/>
            <person name="Sykes S."/>
            <person name="Schwartz D.C."/>
            <person name="Turgeon B.G."/>
            <person name="Wapinski I."/>
            <person name="Yoder O."/>
            <person name="Young S."/>
            <person name="Zeng Q."/>
            <person name="Zhou S."/>
            <person name="Galagan J."/>
            <person name="Cuomo C.A."/>
            <person name="Kistler H.C."/>
            <person name="Rep M."/>
        </authorList>
    </citation>
    <scope>GENOME REANNOTATION</scope>
    <source>
        <strain>ATCC MYA-4620 / CBS 123657 / FGSC 9075 / NRRL 31084 / PH-1</strain>
    </source>
</reference>
<reference key="3">
    <citation type="journal article" date="2015" name="BMC Genomics">
        <title>The completed genome sequence of the pathogenic ascomycete fungus Fusarium graminearum.</title>
        <authorList>
            <person name="King R."/>
            <person name="Urban M."/>
            <person name="Hammond-Kosack M.C.U."/>
            <person name="Hassani-Pak K."/>
            <person name="Hammond-Kosack K.E."/>
        </authorList>
    </citation>
    <scope>NUCLEOTIDE SEQUENCE [LARGE SCALE GENOMIC DNA]</scope>
    <source>
        <strain>ATCC MYA-4620 / CBS 123657 / FGSC 9075 / NRRL 31084 / PH-1</strain>
    </source>
</reference>
<reference key="4">
    <citation type="journal article" date="2017" name="Sci. Rep.">
        <title>Genome-wide functional analysis reveals that autophagy is necessary for growth, sporulation, deoxynivalenol production and virulence in Fusarium graminearum.</title>
        <authorList>
            <person name="Lv W."/>
            <person name="Wang C."/>
            <person name="Yang N."/>
            <person name="Que Y."/>
            <person name="Talbot N.J."/>
            <person name="Wang Z."/>
        </authorList>
    </citation>
    <scope>IDENTIFICATION</scope>
    <scope>FUNCTION</scope>
    <scope>DISRUPTION PHENOTYPE</scope>
</reference>
<keyword id="KW-0072">Autophagy</keyword>
<keyword id="KW-0175">Coiled coil</keyword>
<keyword id="KW-0472">Membrane</keyword>
<keyword id="KW-0653">Protein transport</keyword>
<keyword id="KW-1185">Reference proteome</keyword>
<keyword id="KW-0813">Transport</keyword>
<gene>
    <name evidence="4" type="primary">ATG16</name>
    <name type="ORF">FG02566</name>
    <name type="ORF">FGRAMPH1_01T06151</name>
</gene>
<organism>
    <name type="scientific">Gibberella zeae (strain ATCC MYA-4620 / CBS 123657 / FGSC 9075 / NRRL 31084 / PH-1)</name>
    <name type="common">Wheat head blight fungus</name>
    <name type="synonym">Fusarium graminearum</name>
    <dbReference type="NCBI Taxonomy" id="229533"/>
    <lineage>
        <taxon>Eukaryota</taxon>
        <taxon>Fungi</taxon>
        <taxon>Dikarya</taxon>
        <taxon>Ascomycota</taxon>
        <taxon>Pezizomycotina</taxon>
        <taxon>Sordariomycetes</taxon>
        <taxon>Hypocreomycetidae</taxon>
        <taxon>Hypocreales</taxon>
        <taxon>Nectriaceae</taxon>
        <taxon>Fusarium</taxon>
    </lineage>
</organism>
<evidence type="ECO:0000250" key="1">
    <source>
        <dbReference type="UniProtKB" id="Q03818"/>
    </source>
</evidence>
<evidence type="ECO:0000255" key="2"/>
<evidence type="ECO:0000269" key="3">
    <source>
    </source>
</evidence>
<evidence type="ECO:0000303" key="4">
    <source>
    </source>
</evidence>
<evidence type="ECO:0000305" key="5"/>
<proteinExistence type="inferred from homology"/>
<protein>
    <recommendedName>
        <fullName evidence="4">Autophagy-related protein 16</fullName>
    </recommendedName>
</protein>